<proteinExistence type="evidence at protein level"/>
<gene>
    <name evidence="9" type="primary">GPR89B</name>
    <name evidence="5" type="synonym">GPHR</name>
    <name evidence="6" type="synonym">GPR89</name>
    <name type="synonym">GPR89C</name>
    <name evidence="7" type="synonym">SH120</name>
    <name type="ORF">HSPC201</name>
</gene>
<keyword id="KW-0325">Glycoprotein</keyword>
<keyword id="KW-0333">Golgi apparatus</keyword>
<keyword id="KW-0407">Ion channel</keyword>
<keyword id="KW-0406">Ion transport</keyword>
<keyword id="KW-0472">Membrane</keyword>
<keyword id="KW-0653">Protein transport</keyword>
<keyword id="KW-1185">Reference proteome</keyword>
<keyword id="KW-0812">Transmembrane</keyword>
<keyword id="KW-1133">Transmembrane helix</keyword>
<keyword id="KW-0813">Transport</keyword>
<keyword id="KW-0851">Voltage-gated channel</keyword>
<feature type="chain" id="PRO_0000395006" description="Golgi pH regulator B">
    <location>
        <begin position="1"/>
        <end position="455"/>
    </location>
</feature>
<feature type="transmembrane region" description="Helical" evidence="2">
    <location>
        <begin position="5"/>
        <end position="25"/>
    </location>
</feature>
<feature type="transmembrane region" description="Helical" evidence="2">
    <location>
        <begin position="46"/>
        <end position="66"/>
    </location>
</feature>
<feature type="transmembrane region" description="Helical" evidence="2">
    <location>
        <begin position="79"/>
        <end position="99"/>
    </location>
</feature>
<feature type="transmembrane region" description="Helical" evidence="2">
    <location>
        <begin position="114"/>
        <end position="134"/>
    </location>
</feature>
<feature type="transmembrane region" description="Helical" evidence="2">
    <location>
        <begin position="150"/>
        <end position="170"/>
    </location>
</feature>
<feature type="transmembrane region" description="Helical" evidence="2">
    <location>
        <begin position="290"/>
        <end position="310"/>
    </location>
</feature>
<feature type="transmembrane region" description="Helical" evidence="2">
    <location>
        <begin position="343"/>
        <end position="363"/>
    </location>
</feature>
<feature type="transmembrane region" description="Helical" evidence="2">
    <location>
        <begin position="378"/>
        <end position="398"/>
    </location>
</feature>
<feature type="transmembrane region" description="Helical" evidence="2">
    <location>
        <begin position="425"/>
        <end position="445"/>
    </location>
</feature>
<feature type="glycosylation site" description="N-linked (GlcNAc...) asparagine" evidence="2">
    <location>
        <position position="180"/>
    </location>
</feature>
<feature type="glycosylation site" description="N-linked (GlcNAc...) asparagine" evidence="2">
    <location>
        <position position="243"/>
    </location>
</feature>
<feature type="sequence conflict" description="In Ref. 3; CAH56393." evidence="8" ref="3">
    <original>LTLI</original>
    <variation>NTMA</variation>
    <location>
        <begin position="244"/>
        <end position="247"/>
    </location>
</feature>
<feature type="sequence conflict" description="In Ref. 4; AAF36121." evidence="8" ref="4">
    <original>V</original>
    <variation>E</variation>
    <location>
        <position position="251"/>
    </location>
</feature>
<feature type="sequence conflict" description="In Ref. 4; AAF36121." evidence="8" ref="4">
    <original>Q</original>
    <variation>R</variation>
    <location>
        <position position="418"/>
    </location>
</feature>
<protein>
    <recommendedName>
        <fullName evidence="8">Golgi pH regulator B</fullName>
    </recommendedName>
    <alternativeName>
        <fullName>Protein GPR89B</fullName>
    </alternativeName>
</protein>
<dbReference type="EMBL" id="U78723">
    <property type="protein sequence ID" value="AAF21463.1"/>
    <property type="molecule type" value="mRNA"/>
</dbReference>
<dbReference type="EMBL" id="AL356004">
    <property type="protein sequence ID" value="CAI17085.1"/>
    <property type="molecule type" value="Genomic_DNA"/>
</dbReference>
<dbReference type="EMBL" id="AL445591">
    <property type="protein sequence ID" value="CAH72386.1"/>
    <property type="molecule type" value="Genomic_DNA"/>
</dbReference>
<dbReference type="EMBL" id="BX537254">
    <property type="protein sequence ID" value="CAH72386.1"/>
    <property type="status" value="JOINED"/>
    <property type="molecule type" value="Genomic_DNA"/>
</dbReference>
<dbReference type="EMBL" id="BX537254">
    <property type="protein sequence ID" value="CAI18821.1"/>
    <property type="molecule type" value="Genomic_DNA"/>
</dbReference>
<dbReference type="EMBL" id="AL445591">
    <property type="protein sequence ID" value="CAI18821.1"/>
    <property type="status" value="JOINED"/>
    <property type="molecule type" value="Genomic_DNA"/>
</dbReference>
<dbReference type="EMBL" id="AL133020">
    <property type="protein sequence ID" value="CAH56393.1"/>
    <property type="molecule type" value="mRNA"/>
</dbReference>
<dbReference type="EMBL" id="AF151035">
    <property type="protein sequence ID" value="AAF36121.1"/>
    <property type="status" value="ALT_SEQ"/>
    <property type="molecule type" value="mRNA"/>
</dbReference>
<dbReference type="CCDS" id="CCDS930.1"/>
<dbReference type="RefSeq" id="NP_001091081.1">
    <property type="nucleotide sequence ID" value="NM_001097612.1"/>
</dbReference>
<dbReference type="RefSeq" id="NP_001337109.1">
    <property type="nucleotide sequence ID" value="NM_001350180.2"/>
</dbReference>
<dbReference type="RefSeq" id="NP_057418.1">
    <property type="nucleotide sequence ID" value="NM_016334.5"/>
</dbReference>
<dbReference type="RefSeq" id="XP_005277458.1">
    <property type="nucleotide sequence ID" value="XM_005277401.3"/>
</dbReference>
<dbReference type="RefSeq" id="XP_006711555.1">
    <property type="nucleotide sequence ID" value="XM_006711492.3"/>
</dbReference>
<dbReference type="RefSeq" id="XP_011507915.1">
    <property type="nucleotide sequence ID" value="XM_011509613.2"/>
</dbReference>
<dbReference type="RefSeq" id="XP_011508212.1">
    <property type="nucleotide sequence ID" value="XM_011509910.2"/>
</dbReference>
<dbReference type="SMR" id="P0CG08"/>
<dbReference type="BioGRID" id="119554">
    <property type="interactions" value="51"/>
</dbReference>
<dbReference type="BioGRID" id="575849">
    <property type="interactions" value="133"/>
</dbReference>
<dbReference type="FunCoup" id="P0CG08">
    <property type="interactions" value="482"/>
</dbReference>
<dbReference type="IntAct" id="P0CG08">
    <property type="interactions" value="31"/>
</dbReference>
<dbReference type="MINT" id="P0CG08"/>
<dbReference type="GlyCosmos" id="P0CG08">
    <property type="glycosylation" value="2 sites, No reported glycans"/>
</dbReference>
<dbReference type="GlyGen" id="P0CG08">
    <property type="glycosylation" value="3 sites, 1 O-linked glycan (1 site)"/>
</dbReference>
<dbReference type="iPTMnet" id="P0CG08"/>
<dbReference type="PhosphoSitePlus" id="P0CG08"/>
<dbReference type="SwissPalm" id="P0CG08"/>
<dbReference type="BioMuta" id="GPR89B"/>
<dbReference type="DMDM" id="298351693"/>
<dbReference type="jPOST" id="P0CG08"/>
<dbReference type="MassIVE" id="P0CG08"/>
<dbReference type="PeptideAtlas" id="P0CG08"/>
<dbReference type="Pumba" id="P0CG08"/>
<dbReference type="Antibodypedia" id="65496">
    <property type="antibodies" value="54 antibodies from 13 providers"/>
</dbReference>
<dbReference type="DNASU" id="51463"/>
<dbReference type="Ensembl" id="ENST00000314163.12">
    <property type="protein sequence ID" value="ENSP00000358233.4"/>
    <property type="gene ID" value="ENSG00000188092.15"/>
</dbReference>
<dbReference type="GeneID" id="51463"/>
<dbReference type="GeneID" id="653519"/>
<dbReference type="KEGG" id="hsa:51463"/>
<dbReference type="KEGG" id="hsa:653519"/>
<dbReference type="MANE-Select" id="ENST00000314163.12">
    <property type="protein sequence ID" value="ENSP00000358233.4"/>
    <property type="RefSeq nucleotide sequence ID" value="NM_016334.5"/>
    <property type="RefSeq protein sequence ID" value="NP_057418.1"/>
</dbReference>
<dbReference type="AGR" id="HGNC:13840"/>
<dbReference type="AGR" id="HGNC:31984"/>
<dbReference type="CTD" id="51463"/>
<dbReference type="CTD" id="653519"/>
<dbReference type="DisGeNET" id="653519"/>
<dbReference type="GeneCards" id="GPR89B"/>
<dbReference type="HGNC" id="HGNC:13840">
    <property type="gene designation" value="GPR89B"/>
</dbReference>
<dbReference type="HPA" id="ENSG00000188092">
    <property type="expression patterns" value="Low tissue specificity"/>
</dbReference>
<dbReference type="MIM" id="612806">
    <property type="type" value="gene"/>
</dbReference>
<dbReference type="neXtProt" id="NX_P0CG08"/>
<dbReference type="PharmGKB" id="PA134986137"/>
<dbReference type="VEuPathDB" id="HostDB:ENSG00000188092"/>
<dbReference type="GeneTree" id="ENSGT00390000000684"/>
<dbReference type="HOGENOM" id="CLU_030540_1_0_1"/>
<dbReference type="InParanoid" id="P0CG08"/>
<dbReference type="OMA" id="IEIGVHW"/>
<dbReference type="OrthoDB" id="264392at2759"/>
<dbReference type="PAN-GO" id="P0CG08">
    <property type="GO annotations" value="3 GO annotations based on evolutionary models"/>
</dbReference>
<dbReference type="PhylomeDB" id="P0CG08"/>
<dbReference type="TreeFam" id="TF313484"/>
<dbReference type="PathwayCommons" id="P0CG08"/>
<dbReference type="SignaLink" id="P0CG08"/>
<dbReference type="BioGRID-ORCS" id="51463">
    <property type="hits" value="102 hits in 680 CRISPR screens"/>
</dbReference>
<dbReference type="BioGRID-ORCS" id="653519">
    <property type="hits" value="250 hits in 1041 CRISPR screens"/>
</dbReference>
<dbReference type="Pharos" id="P0CG08">
    <property type="development level" value="Tbio"/>
</dbReference>
<dbReference type="PRO" id="PR:P0CG08"/>
<dbReference type="Proteomes" id="UP000005640">
    <property type="component" value="Chromosome 1"/>
</dbReference>
<dbReference type="RNAct" id="P0CG08">
    <property type="molecule type" value="protein"/>
</dbReference>
<dbReference type="Bgee" id="ENSG00000188092">
    <property type="expression patterns" value="Expressed in male germ line stem cell (sensu Vertebrata) in testis and 100 other cell types or tissues"/>
</dbReference>
<dbReference type="ExpressionAtlas" id="P0CG08">
    <property type="expression patterns" value="baseline and differential"/>
</dbReference>
<dbReference type="GO" id="GO:0032580">
    <property type="term" value="C:Golgi cisterna membrane"/>
    <property type="evidence" value="ECO:0000318"/>
    <property type="project" value="GO_Central"/>
</dbReference>
<dbReference type="GO" id="GO:0000139">
    <property type="term" value="C:Golgi membrane"/>
    <property type="evidence" value="ECO:0007669"/>
    <property type="project" value="UniProtKB-SubCell"/>
</dbReference>
<dbReference type="GO" id="GO:0034702">
    <property type="term" value="C:monoatomic ion channel complex"/>
    <property type="evidence" value="ECO:0007669"/>
    <property type="project" value="UniProtKB-KW"/>
</dbReference>
<dbReference type="GO" id="GO:0008308">
    <property type="term" value="F:voltage-gated monoatomic anion channel activity"/>
    <property type="evidence" value="ECO:0000318"/>
    <property type="project" value="GO_Central"/>
</dbReference>
<dbReference type="GO" id="GO:0051452">
    <property type="term" value="P:intracellular pH reduction"/>
    <property type="evidence" value="ECO:0000318"/>
    <property type="project" value="GO_Central"/>
</dbReference>
<dbReference type="GO" id="GO:0015031">
    <property type="term" value="P:protein transport"/>
    <property type="evidence" value="ECO:0007669"/>
    <property type="project" value="UniProtKB-KW"/>
</dbReference>
<dbReference type="GO" id="GO:0030217">
    <property type="term" value="P:T cell differentiation"/>
    <property type="evidence" value="ECO:0000250"/>
    <property type="project" value="UniProtKB"/>
</dbReference>
<dbReference type="InterPro" id="IPR025969">
    <property type="entry name" value="ABA_GPCR_dom"/>
</dbReference>
<dbReference type="InterPro" id="IPR022535">
    <property type="entry name" value="Golgi_pH-regulator_cons_dom"/>
</dbReference>
<dbReference type="InterPro" id="IPR015672">
    <property type="entry name" value="GPHR/GTG"/>
</dbReference>
<dbReference type="PANTHER" id="PTHR15948">
    <property type="entry name" value="G-PROTEIN COUPLED RECEPTOR 89-RELATED"/>
    <property type="match status" value="1"/>
</dbReference>
<dbReference type="PANTHER" id="PTHR15948:SF0">
    <property type="entry name" value="GOLGI PH REGULATOR A-RELATED"/>
    <property type="match status" value="1"/>
</dbReference>
<dbReference type="Pfam" id="PF12430">
    <property type="entry name" value="ABA_GPCR"/>
    <property type="match status" value="1"/>
</dbReference>
<dbReference type="Pfam" id="PF12537">
    <property type="entry name" value="GPHR_N"/>
    <property type="match status" value="1"/>
</dbReference>
<evidence type="ECO:0000250" key="1">
    <source>
        <dbReference type="UniProtKB" id="Q8BS95"/>
    </source>
</evidence>
<evidence type="ECO:0000255" key="2"/>
<evidence type="ECO:0000269" key="3">
    <source>
    </source>
</evidence>
<evidence type="ECO:0000269" key="4">
    <source>
    </source>
</evidence>
<evidence type="ECO:0000303" key="5">
    <source>
    </source>
</evidence>
<evidence type="ECO:0000303" key="6">
    <source>
    </source>
</evidence>
<evidence type="ECO:0000303" key="7">
    <source ref="1"/>
</evidence>
<evidence type="ECO:0000305" key="8"/>
<evidence type="ECO:0000312" key="9">
    <source>
        <dbReference type="HGNC" id="HGNC:13840"/>
    </source>
</evidence>
<reference key="1">
    <citation type="submission" date="2000-01" db="EMBL/GenBank/DDBJ databases">
        <title>Identification of 15 genes mapping to chromosome 6p21.3 spanning the microsatellite markers D6S306 and D6S1260. Characterization of three genes encoding zinc finger proteins.</title>
        <authorList>
            <person name="Lee P.L."/>
            <person name="Gelbart T."/>
            <person name="West C."/>
            <person name="Adams M."/>
            <person name="Blackstone R."/>
            <person name="Meyer A."/>
        </authorList>
    </citation>
    <scope>NUCLEOTIDE SEQUENCE [MRNA]</scope>
    <source>
        <tissue>Ovary</tissue>
    </source>
</reference>
<reference key="2">
    <citation type="journal article" date="2006" name="Nature">
        <title>The DNA sequence and biological annotation of human chromosome 1.</title>
        <authorList>
            <person name="Gregory S.G."/>
            <person name="Barlow K.F."/>
            <person name="McLay K.E."/>
            <person name="Kaul R."/>
            <person name="Swarbreck D."/>
            <person name="Dunham A."/>
            <person name="Scott C.E."/>
            <person name="Howe K.L."/>
            <person name="Woodfine K."/>
            <person name="Spencer C.C.A."/>
            <person name="Jones M.C."/>
            <person name="Gillson C."/>
            <person name="Searle S."/>
            <person name="Zhou Y."/>
            <person name="Kokocinski F."/>
            <person name="McDonald L."/>
            <person name="Evans R."/>
            <person name="Phillips K."/>
            <person name="Atkinson A."/>
            <person name="Cooper R."/>
            <person name="Jones C."/>
            <person name="Hall R.E."/>
            <person name="Andrews T.D."/>
            <person name="Lloyd C."/>
            <person name="Ainscough R."/>
            <person name="Almeida J.P."/>
            <person name="Ambrose K.D."/>
            <person name="Anderson F."/>
            <person name="Andrew R.W."/>
            <person name="Ashwell R.I.S."/>
            <person name="Aubin K."/>
            <person name="Babbage A.K."/>
            <person name="Bagguley C.L."/>
            <person name="Bailey J."/>
            <person name="Beasley H."/>
            <person name="Bethel G."/>
            <person name="Bird C.P."/>
            <person name="Bray-Allen S."/>
            <person name="Brown J.Y."/>
            <person name="Brown A.J."/>
            <person name="Buckley D."/>
            <person name="Burton J."/>
            <person name="Bye J."/>
            <person name="Carder C."/>
            <person name="Chapman J.C."/>
            <person name="Clark S.Y."/>
            <person name="Clarke G."/>
            <person name="Clee C."/>
            <person name="Cobley V."/>
            <person name="Collier R.E."/>
            <person name="Corby N."/>
            <person name="Coville G.J."/>
            <person name="Davies J."/>
            <person name="Deadman R."/>
            <person name="Dunn M."/>
            <person name="Earthrowl M."/>
            <person name="Ellington A.G."/>
            <person name="Errington H."/>
            <person name="Frankish A."/>
            <person name="Frankland J."/>
            <person name="French L."/>
            <person name="Garner P."/>
            <person name="Garnett J."/>
            <person name="Gay L."/>
            <person name="Ghori M.R.J."/>
            <person name="Gibson R."/>
            <person name="Gilby L.M."/>
            <person name="Gillett W."/>
            <person name="Glithero R.J."/>
            <person name="Grafham D.V."/>
            <person name="Griffiths C."/>
            <person name="Griffiths-Jones S."/>
            <person name="Grocock R."/>
            <person name="Hammond S."/>
            <person name="Harrison E.S.I."/>
            <person name="Hart E."/>
            <person name="Haugen E."/>
            <person name="Heath P.D."/>
            <person name="Holmes S."/>
            <person name="Holt K."/>
            <person name="Howden P.J."/>
            <person name="Hunt A.R."/>
            <person name="Hunt S.E."/>
            <person name="Hunter G."/>
            <person name="Isherwood J."/>
            <person name="James R."/>
            <person name="Johnson C."/>
            <person name="Johnson D."/>
            <person name="Joy A."/>
            <person name="Kay M."/>
            <person name="Kershaw J.K."/>
            <person name="Kibukawa M."/>
            <person name="Kimberley A.M."/>
            <person name="King A."/>
            <person name="Knights A.J."/>
            <person name="Lad H."/>
            <person name="Laird G."/>
            <person name="Lawlor S."/>
            <person name="Leongamornlert D.A."/>
            <person name="Lloyd D.M."/>
            <person name="Loveland J."/>
            <person name="Lovell J."/>
            <person name="Lush M.J."/>
            <person name="Lyne R."/>
            <person name="Martin S."/>
            <person name="Mashreghi-Mohammadi M."/>
            <person name="Matthews L."/>
            <person name="Matthews N.S.W."/>
            <person name="McLaren S."/>
            <person name="Milne S."/>
            <person name="Mistry S."/>
            <person name="Moore M.J.F."/>
            <person name="Nickerson T."/>
            <person name="O'Dell C.N."/>
            <person name="Oliver K."/>
            <person name="Palmeiri A."/>
            <person name="Palmer S.A."/>
            <person name="Parker A."/>
            <person name="Patel D."/>
            <person name="Pearce A.V."/>
            <person name="Peck A.I."/>
            <person name="Pelan S."/>
            <person name="Phelps K."/>
            <person name="Phillimore B.J."/>
            <person name="Plumb R."/>
            <person name="Rajan J."/>
            <person name="Raymond C."/>
            <person name="Rouse G."/>
            <person name="Saenphimmachak C."/>
            <person name="Sehra H.K."/>
            <person name="Sheridan E."/>
            <person name="Shownkeen R."/>
            <person name="Sims S."/>
            <person name="Skuce C.D."/>
            <person name="Smith M."/>
            <person name="Steward C."/>
            <person name="Subramanian S."/>
            <person name="Sycamore N."/>
            <person name="Tracey A."/>
            <person name="Tromans A."/>
            <person name="Van Helmond Z."/>
            <person name="Wall M."/>
            <person name="Wallis J.M."/>
            <person name="White S."/>
            <person name="Whitehead S.L."/>
            <person name="Wilkinson J.E."/>
            <person name="Willey D.L."/>
            <person name="Williams H."/>
            <person name="Wilming L."/>
            <person name="Wray P.W."/>
            <person name="Wu Z."/>
            <person name="Coulson A."/>
            <person name="Vaudin M."/>
            <person name="Sulston J.E."/>
            <person name="Durbin R.M."/>
            <person name="Hubbard T."/>
            <person name="Wooster R."/>
            <person name="Dunham I."/>
            <person name="Carter N.P."/>
            <person name="McVean G."/>
            <person name="Ross M.T."/>
            <person name="Harrow J."/>
            <person name="Olson M.V."/>
            <person name="Beck S."/>
            <person name="Rogers J."/>
            <person name="Bentley D.R."/>
        </authorList>
    </citation>
    <scope>NUCLEOTIDE SEQUENCE [LARGE SCALE GENOMIC DNA]</scope>
</reference>
<reference key="3">
    <citation type="journal article" date="2007" name="BMC Genomics">
        <title>The full-ORF clone resource of the German cDNA consortium.</title>
        <authorList>
            <person name="Bechtel S."/>
            <person name="Rosenfelder H."/>
            <person name="Duda A."/>
            <person name="Schmidt C.P."/>
            <person name="Ernst U."/>
            <person name="Wellenreuther R."/>
            <person name="Mehrle A."/>
            <person name="Schuster C."/>
            <person name="Bahr A."/>
            <person name="Bloecker H."/>
            <person name="Heubner D."/>
            <person name="Hoerlein A."/>
            <person name="Michel G."/>
            <person name="Wedler H."/>
            <person name="Koehrer K."/>
            <person name="Ottenwaelder B."/>
            <person name="Poustka A."/>
            <person name="Wiemann S."/>
            <person name="Schupp I."/>
        </authorList>
    </citation>
    <scope>NUCLEOTIDE SEQUENCE [LARGE SCALE MRNA] OF 1-247</scope>
    <source>
        <tissue>Testis</tissue>
    </source>
</reference>
<reference key="4">
    <citation type="journal article" date="2000" name="Genome Res.">
        <title>Cloning and functional analysis of cDNAs with open reading frames for 300 previously undefined genes expressed in CD34+ hematopoietic stem/progenitor cells.</title>
        <authorList>
            <person name="Zhang Q.-H."/>
            <person name="Ye M."/>
            <person name="Wu X.-Y."/>
            <person name="Ren S.-X."/>
            <person name="Zhao M."/>
            <person name="Zhao C.-J."/>
            <person name="Fu G."/>
            <person name="Shen Y."/>
            <person name="Fan H.-Y."/>
            <person name="Lu G."/>
            <person name="Zhong M."/>
            <person name="Xu X.-R."/>
            <person name="Han Z.-G."/>
            <person name="Zhang J.-W."/>
            <person name="Tao J."/>
            <person name="Huang Q.-H."/>
            <person name="Zhou J."/>
            <person name="Hu G.-X."/>
            <person name="Gu J."/>
            <person name="Chen S.-J."/>
            <person name="Chen Z."/>
        </authorList>
    </citation>
    <scope>NUCLEOTIDE SEQUENCE [LARGE SCALE MRNA] OF 249-455</scope>
    <source>
        <tissue>Umbilical cord blood</tissue>
    </source>
</reference>
<reference key="5">
    <citation type="journal article" date="2008" name="Nat. Cell Biol.">
        <title>GPHR is a novel anion channel critical for acidification and functions of the Golgi apparatus.</title>
        <authorList>
            <person name="Maeda Y."/>
            <person name="Ide T."/>
            <person name="Koike M."/>
            <person name="Uchiyama Y."/>
            <person name="Kinoshita T."/>
        </authorList>
    </citation>
    <scope>FUNCTION</scope>
    <scope>TRANSPORTER ACTIVITY</scope>
    <scope>SUBCELLULAR LOCATION</scope>
    <scope>SUBUNIT</scope>
    <scope>TISSUE SPECIFICITY</scope>
</reference>
<reference key="6">
    <citation type="journal article" date="2009" name="Cell">
        <title>Two novel GPCR-type G proteins are abscisic acid receptors in Arabidopsis.</title>
        <authorList>
            <person name="Pandey S."/>
            <person name="Nelson D.C."/>
            <person name="Assmann S.M."/>
        </authorList>
    </citation>
    <scope>LACK OF GTP-BINDING</scope>
</reference>
<sequence length="455" mass="52917">MSFLIDSSIMITSQILFFGFGWLFFMRQLFKDYEIRQYVVQVIFSVTFAFSCTMFELIIFEILGVLNSSSRYFHWKMNLCVILLILVFMVPFYIGYFIVSNIRLLHKQRLLFSCLLWLTFMYFFWKLGDPFPILSPKHGILSIEQLISRVGVIGVTLMALLSGFGAVNCPYTYMSYFLRNVTDTDILALERRLLQTMDMIISKKKRMAMARRTMFQKGEVHNKPSGFWGMIKSVTTSASGSENLTLIQQEVDALEELSRQLFLETADLYATKERIEYSKTFKGKYFNFLGYFFSIYCVWKIFMATINIVFDRVGKTDPVTRGIEITVNYLGIQFDVKFWSQHISFILVGIIIVTSIRGLLITLTKFFYAISSSKSSNVIVLLLAQIMGMYFVSSVLLIRMSMPLEYRTIITEVLGELQFNFYHRWFDVIFLVSALSSILFLYLAHKQAPEKQMAP</sequence>
<name>GPHRB_HUMAN</name>
<comment type="function">
    <text evidence="1 3">Voltage-gated channel that enables the transfer of anions such as iodide, chloride, bromide and fluoride which may function in counter-ion conductance and participates in Golgi acidification (PubMed:18794847). Plays a role in lymphocyte development, probably by acting as a RABL3 effector in hematopoietic cells (By similarity).</text>
</comment>
<comment type="catalytic activity">
    <reaction evidence="3">
        <text>iodide(out) = iodide(in)</text>
        <dbReference type="Rhea" id="RHEA:66324"/>
        <dbReference type="ChEBI" id="CHEBI:16382"/>
    </reaction>
</comment>
<comment type="catalytic activity">
    <reaction evidence="3">
        <text>chloride(in) = chloride(out)</text>
        <dbReference type="Rhea" id="RHEA:29823"/>
        <dbReference type="ChEBI" id="CHEBI:17996"/>
    </reaction>
</comment>
<comment type="catalytic activity">
    <reaction evidence="3">
        <text>bromide(in) = bromide(out)</text>
        <dbReference type="Rhea" id="RHEA:75383"/>
        <dbReference type="ChEBI" id="CHEBI:15858"/>
    </reaction>
</comment>
<comment type="catalytic activity">
    <reaction evidence="3">
        <text>fluoride(in) = fluoride(out)</text>
        <dbReference type="Rhea" id="RHEA:76159"/>
        <dbReference type="ChEBI" id="CHEBI:17051"/>
    </reaction>
</comment>
<comment type="subunit">
    <text evidence="1 3">Homotrimer (PubMed:18794847). Interacts with RABL3; the interaction stabilizes GPR89B (By similarity).</text>
</comment>
<comment type="interaction">
    <interactant intactId="EBI-11905631">
        <id>P0CG08</id>
    </interactant>
    <interactant intactId="EBI-720609">
        <id>O76024</id>
        <label>WFS1</label>
    </interactant>
    <organismsDiffer>false</organismsDiffer>
    <experiments>3</experiments>
</comment>
<comment type="subcellular location">
    <subcellularLocation>
        <location evidence="3">Golgi apparatus membrane</location>
        <topology evidence="2">Multi-pass membrane protein</topology>
    </subcellularLocation>
</comment>
<comment type="tissue specificity">
    <text evidence="3">Ubiquitous.</text>
</comment>
<comment type="miscellaneous">
    <text evidence="4">Does not seem to be able to bind GTP.</text>
</comment>
<comment type="similarity">
    <text evidence="8">Belongs to the Golgi pH regulator (TC 1.A.38) family.</text>
</comment>
<comment type="sequence caution" evidence="8">
    <conflict type="erroneous termination">
        <sequence resource="EMBL-CDS" id="AAF36121"/>
    </conflict>
    <text>Truncated C-terminus.</text>
</comment>
<accession>P0CG08</accession>
<accession>A6NKF9</accession>
<accession>A6NN37</accession>
<accession>B2RUV3</accession>
<accession>B3KMN3</accession>
<accession>Q53FQ9</accession>
<accession>Q5T2V8</accession>
<accession>Q5T5P5</accession>
<accession>Q659E2</accession>
<accession>Q6NVY5</accession>
<accession>Q9P0S4</accession>
<accession>Q9Y302</accession>
<organism>
    <name type="scientific">Homo sapiens</name>
    <name type="common">Human</name>
    <dbReference type="NCBI Taxonomy" id="9606"/>
    <lineage>
        <taxon>Eukaryota</taxon>
        <taxon>Metazoa</taxon>
        <taxon>Chordata</taxon>
        <taxon>Craniata</taxon>
        <taxon>Vertebrata</taxon>
        <taxon>Euteleostomi</taxon>
        <taxon>Mammalia</taxon>
        <taxon>Eutheria</taxon>
        <taxon>Euarchontoglires</taxon>
        <taxon>Primates</taxon>
        <taxon>Haplorrhini</taxon>
        <taxon>Catarrhini</taxon>
        <taxon>Hominidae</taxon>
        <taxon>Homo</taxon>
    </lineage>
</organism>